<protein>
    <recommendedName>
        <fullName>Frameshifted structural polyprotein</fullName>
    </recommendedName>
    <alternativeName>
        <fullName>p130</fullName>
    </alternativeName>
    <component>
        <recommendedName>
            <fullName>Capsid protein</fullName>
            <ecNumber evidence="2">3.4.21.90</ecNumber>
        </recommendedName>
        <alternativeName>
            <fullName>Coat protein</fullName>
            <shortName>C</shortName>
        </alternativeName>
    </component>
    <component>
        <recommendedName>
            <fullName>Precursor of protein E3/E2</fullName>
        </recommendedName>
        <alternativeName>
            <fullName>p62</fullName>
        </alternativeName>
        <alternativeName>
            <fullName>pE2</fullName>
        </alternativeName>
    </component>
    <component>
        <recommendedName>
            <fullName>Assembly protein E3</fullName>
        </recommendedName>
    </component>
    <component>
        <recommendedName>
            <fullName>Spike glycoprotein E2</fullName>
        </recommendedName>
        <alternativeName>
            <fullName>E2 envelope glycoprotein</fullName>
        </alternativeName>
    </component>
    <component>
        <recommendedName>
            <fullName>Protein TF</fullName>
        </recommendedName>
    </component>
</protein>
<accession>P0DOK1</accession>
<organismHost>
    <name type="scientific">Aedes aegypti</name>
    <name type="common">Yellowfever mosquito</name>
    <name type="synonym">Culex aegypti</name>
    <dbReference type="NCBI Taxonomy" id="7159"/>
</organismHost>
<organismHost>
    <name type="scientific">Aedes albopictus</name>
    <name type="common">Asian tiger mosquito</name>
    <name type="synonym">Stegomyia albopicta</name>
    <dbReference type="NCBI Taxonomy" id="7160"/>
</organismHost>
<organismHost>
    <name type="scientific">Aedes furcifer</name>
    <name type="common">Mosquito</name>
    <dbReference type="NCBI Taxonomy" id="299627"/>
</organismHost>
<organismHost>
    <name type="scientific">Aedes polynesiensis</name>
    <name type="common">Polynesian tiger mosquito</name>
    <dbReference type="NCBI Taxonomy" id="188700"/>
</organismHost>
<organismHost>
    <name type="scientific">Cercopithecus</name>
    <dbReference type="NCBI Taxonomy" id="9533"/>
</organismHost>
<organismHost>
    <name type="scientific">Homo sapiens</name>
    <name type="common">Human</name>
    <dbReference type="NCBI Taxonomy" id="9606"/>
</organismHost>
<organismHost>
    <name type="scientific">Macaca</name>
    <name type="common">macaques</name>
    <dbReference type="NCBI Taxonomy" id="9539"/>
</organismHost>
<organismHost>
    <name type="scientific">Pan troglodytes</name>
    <name type="common">Chimpanzee</name>
    <dbReference type="NCBI Taxonomy" id="9598"/>
</organismHost>
<organismHost>
    <name type="scientific">Papio</name>
    <name type="common">baboons</name>
    <dbReference type="NCBI Taxonomy" id="9554"/>
</organismHost>
<organismHost>
    <name type="scientific">Presbytis</name>
    <dbReference type="NCBI Taxonomy" id="9573"/>
</organismHost>
<reference key="1">
    <citation type="journal article" date="2002" name="J. Gen. Virol.">
        <title>Complete nucleotide sequence of chikungunya virus and evidence for an internal polyadenylation site.</title>
        <authorList>
            <person name="Khan A.H."/>
            <person name="Morita K."/>
            <person name="Parquet Md Mdel C."/>
            <person name="Hasebe F."/>
            <person name="Mathenge E.G."/>
            <person name="Igarashi A."/>
        </authorList>
    </citation>
    <scope>NUCLEOTIDE SEQUENCE [GENOMIC RNA]</scope>
</reference>
<reference key="2">
    <citation type="journal article" date="1984" name="J. Virol.">
        <title>Structural proteins of Chikungunya virus.</title>
        <authorList>
            <person name="Simizu B."/>
            <person name="Yamamoto K."/>
            <person name="Hashimoto K."/>
            <person name="Ogata T."/>
        </authorList>
    </citation>
    <scope>SUBCELLULAR LOCATION (SPIKE GLYCOPROTEIN E2)</scope>
</reference>
<reference key="3">
    <citation type="journal article" date="2011" name="Virol. J.">
        <title>Functional processing and secretion of Chikungunya virus E1 and E2 glycoproteins in insect cells.</title>
        <authorList>
            <person name="Metz S.W."/>
            <person name="Geertsema C."/>
            <person name="Martina B.E."/>
            <person name="Andrade P."/>
            <person name="Heldens J.G."/>
            <person name="van Oers M.M."/>
            <person name="Goldbach R.W."/>
            <person name="Vlak J.M."/>
            <person name="Pijlman G.P."/>
        </authorList>
    </citation>
    <scope>SUBCELLULAR LOCATION (SPIKE GLYCOPROTEIN E2)</scope>
</reference>
<reference key="4">
    <citation type="journal article" date="2018" name="Virology">
        <title>Structure-function insights into chikungunya virus capsid protein: Small molecules targeting capsid hydrophobic pocket.</title>
        <authorList>
            <person name="Sharma R."/>
            <person name="Kesari P."/>
            <person name="Kumar P."/>
            <person name="Tomar S."/>
        </authorList>
    </citation>
    <scope>X-RAY CRYSTALLOGRAPHY (2.2 ANGSTROMS) OF 106-261</scope>
    <scope>SUBUNIT</scope>
</reference>
<feature type="chain" id="PRO_0000442839" description="Capsid protein">
    <location>
        <begin position="1"/>
        <end position="261"/>
    </location>
</feature>
<feature type="chain" id="PRO_0000442840" description="Precursor of protein E3/E2">
    <location>
        <begin position="262"/>
        <end position="748"/>
    </location>
</feature>
<feature type="chain" id="PRO_0000442841" description="Assembly protein E3">
    <location>
        <begin position="262"/>
        <end position="325"/>
    </location>
</feature>
<feature type="chain" id="PRO_0000442842" description="Spike glycoprotein E2">
    <location>
        <begin position="326"/>
        <end position="748"/>
    </location>
</feature>
<feature type="chain" id="PRO_0000442843" description="Protein TF">
    <location>
        <begin position="749"/>
        <end position="824"/>
    </location>
</feature>
<feature type="topological domain" description="Extracellular" evidence="8">
    <location>
        <begin position="262"/>
        <end position="692"/>
    </location>
</feature>
<feature type="transmembrane region" description="Helical" evidence="8">
    <location>
        <begin position="693"/>
        <end position="713"/>
    </location>
</feature>
<feature type="topological domain" description="Cytoplasmic" evidence="8">
    <location>
        <begin position="714"/>
        <end position="748"/>
    </location>
</feature>
<feature type="topological domain" description="Extracellular" evidence="8">
    <location>
        <begin position="749"/>
        <end position="763"/>
    </location>
</feature>
<feature type="transmembrane region" description="Helical" evidence="8">
    <location>
        <begin position="764"/>
        <end position="784"/>
    </location>
</feature>
<feature type="topological domain" description="Cytoplasmic" evidence="8">
    <location>
        <begin position="785"/>
        <end position="795"/>
    </location>
</feature>
<feature type="domain" description="Peptidase S3" evidence="9">
    <location>
        <begin position="113"/>
        <end position="261"/>
    </location>
</feature>
<feature type="region of interest" description="Disordered" evidence="10">
    <location>
        <begin position="1"/>
        <end position="104"/>
    </location>
</feature>
<feature type="region of interest" description="Host transcription inhibition" evidence="4">
    <location>
        <begin position="36"/>
        <end position="68"/>
    </location>
</feature>
<feature type="region of interest" description="Binding to the viral RNA" evidence="6">
    <location>
        <begin position="84"/>
        <end position="114"/>
    </location>
</feature>
<feature type="region of interest" description="Ribosome-binding" evidence="1">
    <location>
        <begin position="91"/>
        <end position="100"/>
    </location>
</feature>
<feature type="region of interest" description="Ribosome-binding" evidence="6">
    <location>
        <begin position="99"/>
        <end position="113"/>
    </location>
</feature>
<feature type="region of interest" description="Dimerization of the capsid protein" evidence="12">
    <location>
        <begin position="183"/>
        <end position="193"/>
    </location>
</feature>
<feature type="region of interest" description="Dimerization of the capsid protein" evidence="12">
    <location>
        <begin position="219"/>
        <end position="223"/>
    </location>
</feature>
<feature type="region of interest" description="Functions as an uncleaved signal peptide for the precursor of protein E3/E2" evidence="2">
    <location>
        <begin position="262"/>
        <end position="274"/>
    </location>
</feature>
<feature type="region of interest" description="Transient transmembrane before p62-6K protein processing" evidence="8">
    <location>
        <begin position="721"/>
        <end position="741"/>
    </location>
</feature>
<feature type="short sequence motif" description="Nuclear localization signal" evidence="4">
    <location>
        <begin position="61"/>
        <end position="99"/>
    </location>
</feature>
<feature type="short sequence motif" description="Nuclear export signal" evidence="4">
    <location>
        <begin position="144"/>
        <end position="154"/>
    </location>
</feature>
<feature type="compositionally biased region" description="Polar residues" evidence="10">
    <location>
        <begin position="1"/>
        <end position="10"/>
    </location>
</feature>
<feature type="compositionally biased region" description="Low complexity" evidence="10">
    <location>
        <begin position="22"/>
        <end position="44"/>
    </location>
</feature>
<feature type="compositionally biased region" description="Basic residues" evidence="10">
    <location>
        <begin position="60"/>
        <end position="72"/>
    </location>
</feature>
<feature type="compositionally biased region" description="Low complexity" evidence="10">
    <location>
        <begin position="73"/>
        <end position="85"/>
    </location>
</feature>
<feature type="compositionally biased region" description="Basic residues" evidence="10">
    <location>
        <begin position="86"/>
        <end position="101"/>
    </location>
</feature>
<feature type="active site" description="Charge relay system" evidence="9">
    <location>
        <position position="139"/>
    </location>
</feature>
<feature type="active site" description="Charge relay system" evidence="9">
    <location>
        <position position="161"/>
    </location>
</feature>
<feature type="active site" description="Charge relay system" evidence="9">
    <location>
        <position position="213"/>
    </location>
</feature>
<feature type="site" description="Cleavage; by autolysis" evidence="2">
    <location>
        <begin position="261"/>
        <end position="262"/>
    </location>
</feature>
<feature type="site" description="Cleavage; by host furin" evidence="1">
    <location>
        <begin position="325"/>
        <end position="326"/>
    </location>
</feature>
<feature type="site" description="Cleavage; by host signal peptidase" evidence="1">
    <location>
        <begin position="748"/>
        <end position="749"/>
    </location>
</feature>
<feature type="site" description="Cleavage; by host signal peptidase" evidence="1">
    <location>
        <begin position="809"/>
        <end position="810"/>
    </location>
</feature>
<feature type="lipid moiety-binding region" description="S-palmitoyl cysteine; by host" evidence="1">
    <location>
        <position position="721"/>
    </location>
</feature>
<feature type="lipid moiety-binding region" description="S-palmitoyl cysteine; by host" evidence="1">
    <location>
        <position position="741"/>
    </location>
</feature>
<feature type="lipid moiety-binding region" description="S-palmitoyl cysteine; by host" evidence="1">
    <location>
        <position position="742"/>
    </location>
</feature>
<feature type="glycosylation site" description="N-linked (GlcNAc...) asparagine; by host" evidence="8">
    <location>
        <position position="273"/>
    </location>
</feature>
<feature type="glycosylation site" description="N-linked (GlcNAc...) asparagine; by host" evidence="8">
    <location>
        <position position="588"/>
    </location>
</feature>
<feature type="glycosylation site" description="N-linked (GlcNAc...) asparagine; by host" evidence="8">
    <location>
        <position position="670"/>
    </location>
</feature>
<feature type="disulfide bond" evidence="1">
    <location>
        <begin position="113"/>
        <end position="128"/>
    </location>
</feature>
<feature type="strand" evidence="14">
    <location>
        <begin position="113"/>
        <end position="119"/>
    </location>
</feature>
<feature type="strand" evidence="14">
    <location>
        <begin position="122"/>
        <end position="130"/>
    </location>
</feature>
<feature type="strand" evidence="14">
    <location>
        <begin position="133"/>
        <end position="137"/>
    </location>
</feature>
<feature type="strand" evidence="14">
    <location>
        <begin position="142"/>
        <end position="145"/>
    </location>
</feature>
<feature type="helix" evidence="14">
    <location>
        <begin position="147"/>
        <end position="150"/>
    </location>
</feature>
<feature type="strand" evidence="14">
    <location>
        <begin position="155"/>
        <end position="157"/>
    </location>
</feature>
<feature type="turn" evidence="14">
    <location>
        <begin position="158"/>
        <end position="161"/>
    </location>
</feature>
<feature type="strand" evidence="14">
    <location>
        <begin position="162"/>
        <end position="166"/>
    </location>
</feature>
<feature type="helix" evidence="14">
    <location>
        <begin position="169"/>
        <end position="174"/>
    </location>
</feature>
<feature type="strand" evidence="14">
    <location>
        <begin position="184"/>
        <end position="189"/>
    </location>
</feature>
<feature type="strand" evidence="14">
    <location>
        <begin position="192"/>
        <end position="197"/>
    </location>
</feature>
<feature type="strand" evidence="14">
    <location>
        <begin position="200"/>
        <end position="204"/>
    </location>
</feature>
<feature type="strand" evidence="14">
    <location>
        <begin position="216"/>
        <end position="218"/>
    </location>
</feature>
<feature type="strand" evidence="14">
    <location>
        <begin position="224"/>
        <end position="233"/>
    </location>
</feature>
<feature type="strand" evidence="14">
    <location>
        <begin position="235"/>
        <end position="246"/>
    </location>
</feature>
<feature type="strand" evidence="14">
    <location>
        <begin position="249"/>
        <end position="253"/>
    </location>
</feature>
<sequence>MEFIPTQTFYNRRYQPRPWTPRPTIQVIRPRPRPQRQAGQLAQLISAVNKLTMRAVPQQKPRKNRKNKKQKQKQQAPQNNTNQKKQPPKKKPAQKKKKPGRRERMCMKIENDCIFEVKHEGKVTGYACLVGDKVMKPAHVKGTIDNADLAKLAFKRSSKYDLECAQIPVHMKSDASKFTHEKPEGYYNWHHGAVQYSGGRFTIPTGAGKPGDSGRPIFDNKGRVVAIVLGGANEGARTALSVVTWNKDIVTKITPEGAEEWSLAIPVMCLLANTTFPCSQPPCIPCCYEKEPEETLRMLEDNVMRPGYYQLLQASLTCSPHRQRRSTKDNFNVYKATRPYLAHCPDCGEGHSCHSPVALERIRNEATDGTLKIQVSLQIGIGTDDSHDWTKLRYMDNHIPADAGRAGLFVRTSAPCTITGTMGHFILARCPKGETLTVGFTDSRKISHSCTHPFHHDPPVIGREKFHSRPQHGKELPCSTYVQSNAATAEEIEVHMPPDTPDRTLLSQQSGNVKITVNSQTVRYKCNCGGSNEGLITTDKVINNCKVDQCHAAVTNHKKWQYNSPLVPRNAELGDRKGKIHIPFPLANVTCMVPKARNPTVTYGKNQVIMLLYPDHPTLLSYRSMGEEPNYQEEWVTHKKEVVLTVPTEGLEVTWGNNEPYKYWPQLSANGTAHGHPHEIILYYYELYPTMTVVVVSVASFILLSMVGMAVGMCMCARRRCITPYELTPGATVPFLLSLICCIRTAKAATYQEAAVYLWNEQQPLFWLQALIPLAALIVLCNCLRLLPCCCKTLAFLSRNEHRCPHCERVRTRNSDPEHGGSTV</sequence>
<organism>
    <name type="scientific">Chikungunya virus (strain S27-African prototype)</name>
    <name type="common">CHIKV</name>
    <dbReference type="NCBI Taxonomy" id="371094"/>
    <lineage>
        <taxon>Viruses</taxon>
        <taxon>Riboviria</taxon>
        <taxon>Orthornavirae</taxon>
        <taxon>Kitrinoviricota</taxon>
        <taxon>Alsuviricetes</taxon>
        <taxon>Martellivirales</taxon>
        <taxon>Togaviridae</taxon>
        <taxon>Alphavirus</taxon>
        <taxon>Chikungunya virus</taxon>
    </lineage>
</organism>
<name>POLSF_CHIKS</name>
<keyword id="KW-0002">3D-structure</keyword>
<keyword id="KW-0167">Capsid protein</keyword>
<keyword id="KW-0165">Cleavage on pair of basic residues</keyword>
<keyword id="KW-1015">Disulfide bond</keyword>
<keyword id="KW-1170">Fusion of virus membrane with host endosomal membrane</keyword>
<keyword id="KW-1168">Fusion of virus membrane with host membrane</keyword>
<keyword id="KW-0325">Glycoprotein</keyword>
<keyword id="KW-1032">Host cell membrane</keyword>
<keyword id="KW-1035">Host cytoplasm</keyword>
<keyword id="KW-1043">Host membrane</keyword>
<keyword id="KW-1048">Host nucleus</keyword>
<keyword id="KW-0945">Host-virus interaction</keyword>
<keyword id="KW-0378">Hydrolase</keyword>
<keyword id="KW-0449">Lipoprotein</keyword>
<keyword id="KW-0472">Membrane</keyword>
<keyword id="KW-0564">Palmitate</keyword>
<keyword id="KW-0645">Protease</keyword>
<keyword id="KW-1185">Reference proteome</keyword>
<keyword id="KW-0688">Ribosomal frameshifting</keyword>
<keyword id="KW-0720">Serine protease</keyword>
<keyword id="KW-1144">T=4 icosahedral capsid protein</keyword>
<keyword id="KW-0812">Transmembrane</keyword>
<keyword id="KW-1133">Transmembrane helix</keyword>
<keyword id="KW-1161">Viral attachment to host cell</keyword>
<keyword id="KW-1162">Viral penetration into host cytoplasm</keyword>
<keyword id="KW-0946">Virion</keyword>
<keyword id="KW-1160">Virus entry into host cell</keyword>
<dbReference type="EC" id="3.4.21.90" evidence="2"/>
<dbReference type="EMBL" id="AF369024">
    <property type="status" value="NOT_ANNOTATED_CDS"/>
    <property type="molecule type" value="Genomic_RNA"/>
</dbReference>
<dbReference type="PDB" id="5H23">
    <property type="method" value="X-ray"/>
    <property type="resolution" value="2.20 A"/>
    <property type="chains" value="A/B=106-261"/>
</dbReference>
<dbReference type="PDBsum" id="5H23"/>
<dbReference type="SMR" id="P0DOK1"/>
<dbReference type="SwissPalm" id="P0DOK1"/>
<dbReference type="Proteomes" id="UP000000569">
    <property type="component" value="Segment"/>
</dbReference>
<dbReference type="GO" id="GO:0030430">
    <property type="term" value="C:host cell cytoplasm"/>
    <property type="evidence" value="ECO:0007669"/>
    <property type="project" value="UniProtKB-SubCell"/>
</dbReference>
<dbReference type="GO" id="GO:0042025">
    <property type="term" value="C:host cell nucleus"/>
    <property type="evidence" value="ECO:0007669"/>
    <property type="project" value="UniProtKB-SubCell"/>
</dbReference>
<dbReference type="GO" id="GO:0020002">
    <property type="term" value="C:host cell plasma membrane"/>
    <property type="evidence" value="ECO:0007669"/>
    <property type="project" value="UniProtKB-SubCell"/>
</dbReference>
<dbReference type="GO" id="GO:0016020">
    <property type="term" value="C:membrane"/>
    <property type="evidence" value="ECO:0007669"/>
    <property type="project" value="UniProtKB-KW"/>
</dbReference>
<dbReference type="GO" id="GO:0039619">
    <property type="term" value="C:T=4 icosahedral viral capsid"/>
    <property type="evidence" value="ECO:0007669"/>
    <property type="project" value="UniProtKB-KW"/>
</dbReference>
<dbReference type="GO" id="GO:0055036">
    <property type="term" value="C:virion membrane"/>
    <property type="evidence" value="ECO:0007669"/>
    <property type="project" value="UniProtKB-SubCell"/>
</dbReference>
<dbReference type="GO" id="GO:0004252">
    <property type="term" value="F:serine-type endopeptidase activity"/>
    <property type="evidence" value="ECO:0007669"/>
    <property type="project" value="InterPro"/>
</dbReference>
<dbReference type="GO" id="GO:0005198">
    <property type="term" value="F:structural molecule activity"/>
    <property type="evidence" value="ECO:0007669"/>
    <property type="project" value="InterPro"/>
</dbReference>
<dbReference type="GO" id="GO:0039654">
    <property type="term" value="P:fusion of virus membrane with host endosome membrane"/>
    <property type="evidence" value="ECO:0007669"/>
    <property type="project" value="UniProtKB-KW"/>
</dbReference>
<dbReference type="GO" id="GO:0006508">
    <property type="term" value="P:proteolysis"/>
    <property type="evidence" value="ECO:0007669"/>
    <property type="project" value="UniProtKB-KW"/>
</dbReference>
<dbReference type="GO" id="GO:0046718">
    <property type="term" value="P:symbiont entry into host cell"/>
    <property type="evidence" value="ECO:0007669"/>
    <property type="project" value="UniProtKB-KW"/>
</dbReference>
<dbReference type="GO" id="GO:0039722">
    <property type="term" value="P:symbiont-mediated suppression of host toll-like receptor signaling pathway"/>
    <property type="evidence" value="ECO:0000250"/>
    <property type="project" value="UniProtKB"/>
</dbReference>
<dbReference type="GO" id="GO:0075523">
    <property type="term" value="P:viral translational frameshifting"/>
    <property type="evidence" value="ECO:0007669"/>
    <property type="project" value="UniProtKB-KW"/>
</dbReference>
<dbReference type="GO" id="GO:0019062">
    <property type="term" value="P:virion attachment to host cell"/>
    <property type="evidence" value="ECO:0007669"/>
    <property type="project" value="UniProtKB-KW"/>
</dbReference>
<dbReference type="FunFam" id="1.10.287.2230:FF:000001">
    <property type="entry name" value="Structural polyprotein"/>
    <property type="match status" value="1"/>
</dbReference>
<dbReference type="FunFam" id="2.40.10.10:FF:000075">
    <property type="entry name" value="Structural polyprotein"/>
    <property type="match status" value="1"/>
</dbReference>
<dbReference type="FunFam" id="2.40.10.10:FF:000076">
    <property type="entry name" value="Structural polyprotein"/>
    <property type="match status" value="1"/>
</dbReference>
<dbReference type="FunFam" id="2.60.40.2400:FF:000001">
    <property type="entry name" value="Structural polyprotein"/>
    <property type="match status" value="1"/>
</dbReference>
<dbReference type="FunFam" id="2.60.40.4310:FF:000001">
    <property type="entry name" value="Structural polyprotein"/>
    <property type="match status" value="1"/>
</dbReference>
<dbReference type="Gene3D" id="1.10.287.2230">
    <property type="match status" value="1"/>
</dbReference>
<dbReference type="Gene3D" id="2.60.40.3200">
    <property type="entry name" value="Alphavirus E2 glycoprotein, A domain"/>
    <property type="match status" value="1"/>
</dbReference>
<dbReference type="Gene3D" id="2.60.40.4310">
    <property type="entry name" value="Alphavirus E2 glycoprotein, domain B"/>
    <property type="match status" value="1"/>
</dbReference>
<dbReference type="Gene3D" id="2.60.40.2400">
    <property type="entry name" value="Alphavirus E2 glycoprotein, domain C"/>
    <property type="match status" value="1"/>
</dbReference>
<dbReference type="Gene3D" id="2.40.10.10">
    <property type="entry name" value="Trypsin-like serine proteases"/>
    <property type="match status" value="2"/>
</dbReference>
<dbReference type="InterPro" id="IPR002548">
    <property type="entry name" value="Alpha_E1_glycop"/>
</dbReference>
<dbReference type="InterPro" id="IPR000936">
    <property type="entry name" value="Alpha_E2_glycop"/>
</dbReference>
<dbReference type="InterPro" id="IPR002533">
    <property type="entry name" value="Alpha_E3_glycop"/>
</dbReference>
<dbReference type="InterPro" id="IPR042304">
    <property type="entry name" value="Alphavir_E2_A"/>
</dbReference>
<dbReference type="InterPro" id="IPR042305">
    <property type="entry name" value="Alphavir_E2_B"/>
</dbReference>
<dbReference type="InterPro" id="IPR042306">
    <property type="entry name" value="Alphavir_E2_C"/>
</dbReference>
<dbReference type="InterPro" id="IPR009003">
    <property type="entry name" value="Peptidase_S1_PA"/>
</dbReference>
<dbReference type="InterPro" id="IPR043504">
    <property type="entry name" value="Peptidase_S1_PA_chymotrypsin"/>
</dbReference>
<dbReference type="InterPro" id="IPR000930">
    <property type="entry name" value="Peptidase_S3"/>
</dbReference>
<dbReference type="Pfam" id="PF01589">
    <property type="entry name" value="Alpha_E1_glycop"/>
    <property type="match status" value="1"/>
</dbReference>
<dbReference type="Pfam" id="PF00943">
    <property type="entry name" value="Alpha_E2_glycop"/>
    <property type="match status" value="1"/>
</dbReference>
<dbReference type="Pfam" id="PF01563">
    <property type="entry name" value="Alpha_E3_glycop"/>
    <property type="match status" value="1"/>
</dbReference>
<dbReference type="Pfam" id="PF00944">
    <property type="entry name" value="Peptidase_S3"/>
    <property type="match status" value="1"/>
</dbReference>
<dbReference type="PRINTS" id="PR00798">
    <property type="entry name" value="TOGAVIRIN"/>
</dbReference>
<dbReference type="SUPFAM" id="SSF50494">
    <property type="entry name" value="Trypsin-like serine proteases"/>
    <property type="match status" value="1"/>
</dbReference>
<dbReference type="PROSITE" id="PS51690">
    <property type="entry name" value="ALPHAVIRUS_CP"/>
    <property type="match status" value="1"/>
</dbReference>
<proteinExistence type="evidence at protein level"/>
<comment type="function">
    <molecule>Capsid protein</molecule>
    <text evidence="2 3 6">Forms an icosahedral capsid with a T=4 symmetry composed of 240 copies of the capsid protein surrounded by a lipid membrane through which penetrate 80 spikes composed of trimers of E1-E2 heterodimers (By similarity). The capsid protein binds to the viral RNA genome at a site adjacent to a ribosome binding site for viral genome translation following genome release (By similarity). Possesses a protease activity that results in its autocatalytic cleavage from the nascent structural protein (By similarity). Following its self-cleavage, the capsid protein transiently associates with ribosomes, and within several minutes the protein binds to viral RNA and rapidly assembles into icosahedric core particles (By similarity). The resulting nucleocapsid eventually associates with the cytoplasmic domain of the spike glycoprotein E2 at the cell membrane, leading to budding and formation of mature virions (By similarity). In case of infection, new virions attach to target cells and after clathrin-mediated endocytosis their membrane fuses with the host endosomal membrane (By similarity). This leads to the release of the nucleocapsid into the cytoplasm, followed by an uncoating event necessary for the genomic RNA to become accessible (By similarity). The uncoating might be triggered by the interaction of capsid proteins with ribosomes (By similarity). Binding of ribosomes would release the genomic RNA since the same region is genomic RNA-binding and ribosome-binding (By similarity). Specifically inhibits interleukin-1 receptor-associated kinase 1/IRAK1-dependent signaling during viral entry, representing a means by which the alphaviruses may evade innate immune detection and activation prior to viral gene expression (By similarity).</text>
</comment>
<comment type="function">
    <molecule>Assembly protein E3</molecule>
    <text evidence="2">Provides the signal sequence for the translocation of the precursor of protein E3/E2 to the host endoplasmic reticulum. Furin-cleaved E3 remains associated with spike glycoprotein E1 and mediates pH protection of the latter during the transport via the secretory pathway. After virion release from the host cell, the assembly protein E3 is gradually released in the extracellular space.</text>
</comment>
<comment type="function">
    <molecule>Spike glycoprotein E2</molecule>
    <text evidence="2">Plays a role in viral attachment to target host cell, by binding to the cell receptor. Synthesized as a p62 precursor which is processed by furin at the cell membrane just before virion budding, giving rise to E2-E1 heterodimer. The p62-E1 heterodimer is stable, whereas E2-E1 is unstable and dissociate at low pH. p62 is processed at the last step, presumably to avoid E1 fusion activation before its final export to cell surface. E2 C-terminus contains a transitory transmembrane that would be disrupted by palmitoylation, resulting in reorientation of the C-terminal tail from lumenal to cytoplasmic side. This step is critical since E2 C-terminus is involved in budding by interacting with capsid proteins. This release of E2 C-terminus in cytoplasm occurs lately in protein export, and precludes premature assembly of particles at the endoplasmic reticulum membrane.</text>
</comment>
<comment type="function">
    <molecule>Protein TF</molecule>
    <text evidence="5">Plays a role in viral assembly and release.</text>
</comment>
<comment type="catalytic activity">
    <reaction evidence="3">
        <text>Autocatalytic release of the core protein from the N-terminus of the togavirus structural polyprotein by hydrolysis of a -Trp-|-Ser- bond.</text>
        <dbReference type="EC" id="3.4.21.90"/>
    </reaction>
</comment>
<comment type="subunit">
    <molecule>Capsid protein</molecule>
    <text evidence="3 7 12 13">Homodimer (PubMed:29306785). Homomultimer (Probable). Interacts with host karyopherin KPNA4; this interaction allows the nuclear import of the viral capsid protein (By similarity). Interacts with spike glycoprotein E2 (By similarity). Interacts with host IRAK1; the interaction leads to inhibition of IRAK1-dependent signaling (By similarity).</text>
</comment>
<comment type="subunit">
    <molecule>Precursor of protein E3/E2</molecule>
    <text evidence="3 7">The precursor of protein E3/E2 and E1 form a heterodimer shortly after synthesis (By similarity).</text>
</comment>
<comment type="subunit">
    <molecule>Spike glycoprotein E2</molecule>
    <text evidence="3 7">Processing of the precursor of protein E3/E2 into E2 and E3 results in a heterodimer of the spike glycoproteins E2 and E1 (By similarity). Spike at virion surface are constituted of three E2-E1 heterodimers (By similarity). Interacts with 6K protein (By similarity). Interacts with host MXRA8; this interaction mediates virus entry (By similarity).</text>
</comment>
<comment type="subcellular location">
    <molecule>Capsid protein</molecule>
    <subcellularLocation>
        <location evidence="3">Virion</location>
    </subcellularLocation>
    <subcellularLocation>
        <location evidence="7">Host cytoplasm</location>
    </subcellularLocation>
    <subcellularLocation>
        <location evidence="3">Host cell membrane</location>
    </subcellularLocation>
    <subcellularLocation>
        <location evidence="7">Host nucleus</location>
    </subcellularLocation>
    <text evidence="7">Shuttles between the cytoplasm and the nucleus.</text>
</comment>
<comment type="subcellular location">
    <molecule>Spike glycoprotein E2</molecule>
    <subcellularLocation>
        <location evidence="7">Virion membrane</location>
        <topology evidence="8">Single-pass type I membrane protein</topology>
    </subcellularLocation>
    <subcellularLocation>
        <location evidence="11">Host cell membrane</location>
        <topology evidence="7">Single-pass type I membrane protein</topology>
    </subcellularLocation>
</comment>
<comment type="alternative products">
    <event type="ribosomal frameshifting"/>
    <isoform>
        <id>P0DOK1-1</id>
        <name>Frameshifted structural polyprotein</name>
        <sequence type="displayed"/>
    </isoform>
    <isoform>
        <id>Q8JUX5-1</id>
        <name>Structural polyprotein</name>
        <sequence type="external"/>
    </isoform>
</comment>
<comment type="domain">
    <molecule>Capsid protein</molecule>
    <text evidence="3 7">The N-terminus contains a nuclear localization signal and a CRM1-mediated nuclear export signal (By similarity). The C-terminus functions as a protease during translation to cleave itself from the translating structural polyprotein (By similarity).</text>
</comment>
<comment type="domain">
    <text evidence="2">Structural polyprotein: As soon as the capsid protein has been autocleaved, an internal uncleaved signal peptide directs the remaining polyprotein to the endoplasmic reticulum.</text>
</comment>
<comment type="PTM">
    <molecule>Isoform Frameshifted structural polyprotein</molecule>
    <text evidence="2">Specific enzymatic cleavages in vivo yield mature proteins. Capsid protein is auto-cleaved during polyprotein translation, unmasking a signal peptide at the N-terminus of the precursor of E3/E2 (By similarity). The remaining polyprotein is then targeted to the host endoplasmic reticulum, where host signal peptidase cleaves it into pE2 and TF. pE2 is further processed to mature E3 and E2 by host furin in trans-Golgi vesicle (By similarity).</text>
</comment>
<comment type="PTM">
    <molecule>Spike glycoprotein E2</molecule>
    <text evidence="5">Palmitoylated via thioester bonds. These palmitoylations may induce disruption of the C-terminus transmembrane. This would result in the reorientation of E2 C-terminus from lumenal to cytoplasmic side.</text>
</comment>
<comment type="PTM">
    <molecule>Protein TF</molecule>
    <text evidence="5">Palmitoylated via thioester bonds.</text>
</comment>
<comment type="miscellaneous">
    <molecule>Isoform Frameshifted structural polyprotein</molecule>
    <text evidence="13">Translated from a subgenomic RNA synthesized during togavirus replication.</text>
</comment>
<comment type="miscellaneous">
    <text evidence="5">Structural polyprotein is translated from a subgenomic RNA synthesized during togavirus replication.</text>
</comment>
<comment type="miscellaneous">
    <molecule>Isoform Frameshifted structural polyprotein</molecule>
    <text>Produced by ribosomal frameshifting.</text>
</comment>
<comment type="similarity">
    <text evidence="13">Belongs to the alphavirus frameshifted structural polyprotein family.</text>
</comment>
<evidence type="ECO:0000250" key="1"/>
<evidence type="ECO:0000250" key="2">
    <source>
        <dbReference type="UniProtKB" id="P03315"/>
    </source>
</evidence>
<evidence type="ECO:0000250" key="3">
    <source>
        <dbReference type="UniProtKB" id="P03316"/>
    </source>
</evidence>
<evidence type="ECO:0000250" key="4">
    <source>
        <dbReference type="UniProtKB" id="P09592"/>
    </source>
</evidence>
<evidence type="ECO:0000250" key="5">
    <source>
        <dbReference type="UniProtKB" id="P0DOK0"/>
    </source>
</evidence>
<evidence type="ECO:0000250" key="6">
    <source>
        <dbReference type="UniProtKB" id="P27284"/>
    </source>
</evidence>
<evidence type="ECO:0000250" key="7">
    <source>
        <dbReference type="UniProtKB" id="Q8JUX5"/>
    </source>
</evidence>
<evidence type="ECO:0000255" key="8"/>
<evidence type="ECO:0000255" key="9">
    <source>
        <dbReference type="PROSITE-ProRule" id="PRU01027"/>
    </source>
</evidence>
<evidence type="ECO:0000256" key="10">
    <source>
        <dbReference type="SAM" id="MobiDB-lite"/>
    </source>
</evidence>
<evidence type="ECO:0000269" key="11">
    <source>
    </source>
</evidence>
<evidence type="ECO:0000269" key="12">
    <source>
    </source>
</evidence>
<evidence type="ECO:0000305" key="13"/>
<evidence type="ECO:0007829" key="14">
    <source>
        <dbReference type="PDB" id="5H23"/>
    </source>
</evidence>